<name>MACIR_PONAB</name>
<keyword id="KW-0007">Acetylation</keyword>
<keyword id="KW-0966">Cell projection</keyword>
<keyword id="KW-0969">Cilium</keyword>
<keyword id="KW-0970">Cilium biogenesis/degradation</keyword>
<keyword id="KW-0963">Cytoplasm</keyword>
<keyword id="KW-0395">Inflammatory response</keyword>
<keyword id="KW-0597">Phosphoprotein</keyword>
<keyword id="KW-0653">Protein transport</keyword>
<keyword id="KW-1185">Reference proteome</keyword>
<keyword id="KW-0813">Transport</keyword>
<evidence type="ECO:0000250" key="1">
    <source>
        <dbReference type="UniProtKB" id="Q96GV9"/>
    </source>
</evidence>
<evidence type="ECO:0000256" key="2">
    <source>
        <dbReference type="SAM" id="MobiDB-lite"/>
    </source>
</evidence>
<evidence type="ECO:0000305" key="3"/>
<protein>
    <recommendedName>
        <fullName>Macrophage immunometabolism regulator</fullName>
    </recommendedName>
</protein>
<dbReference type="EMBL" id="CR857897">
    <property type="protein sequence ID" value="CAH90149.1"/>
    <property type="molecule type" value="mRNA"/>
</dbReference>
<dbReference type="RefSeq" id="NP_001125041.1">
    <property type="nucleotide sequence ID" value="NM_001131569.1"/>
</dbReference>
<dbReference type="STRING" id="9601.ENSPPYP00000017520"/>
<dbReference type="GeneID" id="100171922"/>
<dbReference type="KEGG" id="pon:100171922"/>
<dbReference type="CTD" id="90355"/>
<dbReference type="eggNOG" id="ENOG502QRGS">
    <property type="taxonomic scope" value="Eukaryota"/>
</dbReference>
<dbReference type="InParanoid" id="Q5RDK8"/>
<dbReference type="OrthoDB" id="9859373at2759"/>
<dbReference type="Proteomes" id="UP000001595">
    <property type="component" value="Unplaced"/>
</dbReference>
<dbReference type="GO" id="GO:0035869">
    <property type="term" value="C:ciliary transition zone"/>
    <property type="evidence" value="ECO:0000250"/>
    <property type="project" value="UniProtKB"/>
</dbReference>
<dbReference type="GO" id="GO:0005737">
    <property type="term" value="C:cytoplasm"/>
    <property type="evidence" value="ECO:0000250"/>
    <property type="project" value="UniProtKB"/>
</dbReference>
<dbReference type="GO" id="GO:0060271">
    <property type="term" value="P:cilium assembly"/>
    <property type="evidence" value="ECO:0000250"/>
    <property type="project" value="UniProtKB"/>
</dbReference>
<dbReference type="GO" id="GO:0006954">
    <property type="term" value="P:inflammatory response"/>
    <property type="evidence" value="ECO:0007669"/>
    <property type="project" value="UniProtKB-KW"/>
</dbReference>
<dbReference type="GO" id="GO:1900016">
    <property type="term" value="P:negative regulation of cytokine production involved in inflammatory response"/>
    <property type="evidence" value="ECO:0007669"/>
    <property type="project" value="TreeGrafter"/>
</dbReference>
<dbReference type="GO" id="GO:0010764">
    <property type="term" value="P:negative regulation of fibroblast migration"/>
    <property type="evidence" value="ECO:0007669"/>
    <property type="project" value="TreeGrafter"/>
</dbReference>
<dbReference type="GO" id="GO:0050728">
    <property type="term" value="P:negative regulation of inflammatory response"/>
    <property type="evidence" value="ECO:0000250"/>
    <property type="project" value="UniProtKB"/>
</dbReference>
<dbReference type="GO" id="GO:0015031">
    <property type="term" value="P:protein transport"/>
    <property type="evidence" value="ECO:0007669"/>
    <property type="project" value="UniProtKB-KW"/>
</dbReference>
<dbReference type="InterPro" id="IPR029219">
    <property type="entry name" value="UNC119-bd"/>
</dbReference>
<dbReference type="PANTHER" id="PTHR31224:SF2">
    <property type="entry name" value="MACROPHAGE IMMUNOMETABOLISM REGULATOR"/>
    <property type="match status" value="1"/>
</dbReference>
<dbReference type="PANTHER" id="PTHR31224">
    <property type="entry name" value="UNC119-BINDING PROTEIN C5ORF30"/>
    <property type="match status" value="1"/>
</dbReference>
<dbReference type="Pfam" id="PF15435">
    <property type="entry name" value="UNC119_bdg"/>
    <property type="match status" value="1"/>
</dbReference>
<proteinExistence type="evidence at transcript level"/>
<reference key="1">
    <citation type="submission" date="2004-11" db="EMBL/GenBank/DDBJ databases">
        <authorList>
            <consortium name="The German cDNA consortium"/>
        </authorList>
    </citation>
    <scope>NUCLEOTIDE SEQUENCE [LARGE SCALE MRNA]</scope>
    <source>
        <tissue>Brain cortex</tissue>
    </source>
</reference>
<accession>Q5RDK8</accession>
<feature type="chain" id="PRO_0000316778" description="Macrophage immunometabolism regulator">
    <location>
        <begin position="1"/>
        <end position="206"/>
    </location>
</feature>
<feature type="region of interest" description="Disordered" evidence="2">
    <location>
        <begin position="1"/>
        <end position="41"/>
    </location>
</feature>
<feature type="modified residue" description="N-acetylmethionine" evidence="1">
    <location>
        <position position="1"/>
    </location>
</feature>
<feature type="modified residue" description="Phosphoserine" evidence="1">
    <location>
        <position position="25"/>
    </location>
</feature>
<feature type="modified residue" description="Phosphoserine" evidence="1">
    <location>
        <position position="140"/>
    </location>
</feature>
<feature type="modified residue" description="Phosphoserine" evidence="1">
    <location>
        <position position="167"/>
    </location>
</feature>
<sequence>MEVDINGESRSTLTTLPFPGAEANSPGKAEAEKPRCSSTPCSPMRRTVSGYQILHMDSNYLVGFTTGEELLKLAQKCTGGEESKAEAMPSLRSKQLDAGLARSSRLYKTRSRYYQPYEIPAVNGRRRRRMPSSGDKCTKSLPYEPYKALHGPLPLCLLKGKRAHSKSLDYLNLDKMIKEPADTEVLQYQLQHLTLRGGRVFARNNT</sequence>
<gene>
    <name type="primary">MACIR</name>
</gene>
<comment type="function">
    <text evidence="1">Regulates the macrophage function, by enhancing the resolution of inflammation and wound repair functions mediated by M2 macrophages. The regulation of macrophage function is, due at least in part, to its ability to inhibit glycolysis. May also play a role in trafficking of proteins via its interaction with UNC119 and UNC119B cargo adapters: may help the release of UNC119 and UNC119B cargo or the recycling of UNC119 and UNC119B. May play a role in ciliary membrane localization via its interaction with UNC119B and protein transport into photoreceptor cells.</text>
</comment>
<comment type="subunit">
    <text evidence="1">Interacts with UNC119 and UNC119B; interaction preferentially takes place when UNC119 and UNC119B are unliganded with myristoylated proteins.</text>
</comment>
<comment type="subcellular location">
    <subcellularLocation>
        <location evidence="1">Cytoplasm</location>
    </subcellularLocation>
    <subcellularLocation>
        <location evidence="1">Cell projection</location>
        <location evidence="1">Cilium</location>
    </subcellularLocation>
    <text evidence="1">Localizes to the transition zone and proximal cilium in addition to being found throughout the cytoplasm.</text>
</comment>
<comment type="similarity">
    <text evidence="3">Belongs to the UNC119-binding protein family.</text>
</comment>
<organism>
    <name type="scientific">Pongo abelii</name>
    <name type="common">Sumatran orangutan</name>
    <name type="synonym">Pongo pygmaeus abelii</name>
    <dbReference type="NCBI Taxonomy" id="9601"/>
    <lineage>
        <taxon>Eukaryota</taxon>
        <taxon>Metazoa</taxon>
        <taxon>Chordata</taxon>
        <taxon>Craniata</taxon>
        <taxon>Vertebrata</taxon>
        <taxon>Euteleostomi</taxon>
        <taxon>Mammalia</taxon>
        <taxon>Eutheria</taxon>
        <taxon>Euarchontoglires</taxon>
        <taxon>Primates</taxon>
        <taxon>Haplorrhini</taxon>
        <taxon>Catarrhini</taxon>
        <taxon>Hominidae</taxon>
        <taxon>Pongo</taxon>
    </lineage>
</organism>